<evidence type="ECO:0000255" key="1">
    <source>
        <dbReference type="HAMAP-Rule" id="MF_00300"/>
    </source>
</evidence>
<comment type="function">
    <text evidence="1">Catalyzes the anti-1,4-elimination of the C-3 phosphate and the C-6 proR hydrogen from 5-enolpyruvylshikimate-3-phosphate (EPSP) to yield chorismate, which is the branch point compound that serves as the starting substrate for the three terminal pathways of aromatic amino acid biosynthesis. This reaction introduces a second double bond into the aromatic ring system.</text>
</comment>
<comment type="catalytic activity">
    <reaction evidence="1">
        <text>5-O-(1-carboxyvinyl)-3-phosphoshikimate = chorismate + phosphate</text>
        <dbReference type="Rhea" id="RHEA:21020"/>
        <dbReference type="ChEBI" id="CHEBI:29748"/>
        <dbReference type="ChEBI" id="CHEBI:43474"/>
        <dbReference type="ChEBI" id="CHEBI:57701"/>
        <dbReference type="EC" id="4.2.3.5"/>
    </reaction>
</comment>
<comment type="cofactor">
    <cofactor evidence="1">
        <name>FMNH2</name>
        <dbReference type="ChEBI" id="CHEBI:57618"/>
    </cofactor>
    <text evidence="1">Reduced FMN (FMNH(2)).</text>
</comment>
<comment type="pathway">
    <text evidence="1">Metabolic intermediate biosynthesis; chorismate biosynthesis; chorismate from D-erythrose 4-phosphate and phosphoenolpyruvate: step 7/7.</text>
</comment>
<comment type="subunit">
    <text evidence="1">Homotetramer.</text>
</comment>
<comment type="similarity">
    <text evidence="1">Belongs to the chorismate synthase family.</text>
</comment>
<dbReference type="EC" id="4.2.3.5" evidence="1"/>
<dbReference type="EMBL" id="AM167904">
    <property type="protein sequence ID" value="CAJ49883.1"/>
    <property type="molecule type" value="Genomic_DNA"/>
</dbReference>
<dbReference type="RefSeq" id="WP_012417934.1">
    <property type="nucleotide sequence ID" value="NC_010645.1"/>
</dbReference>
<dbReference type="SMR" id="Q2KYK7"/>
<dbReference type="STRING" id="360910.BAV2273"/>
<dbReference type="KEGG" id="bav:BAV2273"/>
<dbReference type="eggNOG" id="COG0082">
    <property type="taxonomic scope" value="Bacteria"/>
</dbReference>
<dbReference type="HOGENOM" id="CLU_034547_0_2_4"/>
<dbReference type="OrthoDB" id="9771806at2"/>
<dbReference type="UniPathway" id="UPA00053">
    <property type="reaction ID" value="UER00090"/>
</dbReference>
<dbReference type="Proteomes" id="UP000001977">
    <property type="component" value="Chromosome"/>
</dbReference>
<dbReference type="GO" id="GO:0005829">
    <property type="term" value="C:cytosol"/>
    <property type="evidence" value="ECO:0007669"/>
    <property type="project" value="TreeGrafter"/>
</dbReference>
<dbReference type="GO" id="GO:0004107">
    <property type="term" value="F:chorismate synthase activity"/>
    <property type="evidence" value="ECO:0007669"/>
    <property type="project" value="UniProtKB-UniRule"/>
</dbReference>
<dbReference type="GO" id="GO:0010181">
    <property type="term" value="F:FMN binding"/>
    <property type="evidence" value="ECO:0007669"/>
    <property type="project" value="TreeGrafter"/>
</dbReference>
<dbReference type="GO" id="GO:0008652">
    <property type="term" value="P:amino acid biosynthetic process"/>
    <property type="evidence" value="ECO:0007669"/>
    <property type="project" value="UniProtKB-KW"/>
</dbReference>
<dbReference type="GO" id="GO:0009073">
    <property type="term" value="P:aromatic amino acid family biosynthetic process"/>
    <property type="evidence" value="ECO:0007669"/>
    <property type="project" value="UniProtKB-KW"/>
</dbReference>
<dbReference type="GO" id="GO:0009423">
    <property type="term" value="P:chorismate biosynthetic process"/>
    <property type="evidence" value="ECO:0007669"/>
    <property type="project" value="UniProtKB-UniRule"/>
</dbReference>
<dbReference type="CDD" id="cd07304">
    <property type="entry name" value="Chorismate_synthase"/>
    <property type="match status" value="1"/>
</dbReference>
<dbReference type="FunFam" id="3.60.150.10:FF:000001">
    <property type="entry name" value="Chorismate synthase"/>
    <property type="match status" value="1"/>
</dbReference>
<dbReference type="Gene3D" id="3.60.150.10">
    <property type="entry name" value="Chorismate synthase AroC"/>
    <property type="match status" value="1"/>
</dbReference>
<dbReference type="HAMAP" id="MF_00300">
    <property type="entry name" value="Chorismate_synth"/>
    <property type="match status" value="1"/>
</dbReference>
<dbReference type="InterPro" id="IPR000453">
    <property type="entry name" value="Chorismate_synth"/>
</dbReference>
<dbReference type="InterPro" id="IPR035904">
    <property type="entry name" value="Chorismate_synth_AroC_sf"/>
</dbReference>
<dbReference type="InterPro" id="IPR020541">
    <property type="entry name" value="Chorismate_synthase_CS"/>
</dbReference>
<dbReference type="NCBIfam" id="TIGR00033">
    <property type="entry name" value="aroC"/>
    <property type="match status" value="1"/>
</dbReference>
<dbReference type="NCBIfam" id="NF003793">
    <property type="entry name" value="PRK05382.1"/>
    <property type="match status" value="1"/>
</dbReference>
<dbReference type="PANTHER" id="PTHR21085">
    <property type="entry name" value="CHORISMATE SYNTHASE"/>
    <property type="match status" value="1"/>
</dbReference>
<dbReference type="PANTHER" id="PTHR21085:SF0">
    <property type="entry name" value="CHORISMATE SYNTHASE"/>
    <property type="match status" value="1"/>
</dbReference>
<dbReference type="Pfam" id="PF01264">
    <property type="entry name" value="Chorismate_synt"/>
    <property type="match status" value="1"/>
</dbReference>
<dbReference type="PIRSF" id="PIRSF001456">
    <property type="entry name" value="Chorismate_synth"/>
    <property type="match status" value="1"/>
</dbReference>
<dbReference type="SUPFAM" id="SSF103263">
    <property type="entry name" value="Chorismate synthase, AroC"/>
    <property type="match status" value="1"/>
</dbReference>
<dbReference type="PROSITE" id="PS00787">
    <property type="entry name" value="CHORISMATE_SYNTHASE_1"/>
    <property type="match status" value="1"/>
</dbReference>
<dbReference type="PROSITE" id="PS00788">
    <property type="entry name" value="CHORISMATE_SYNTHASE_2"/>
    <property type="match status" value="1"/>
</dbReference>
<dbReference type="PROSITE" id="PS00789">
    <property type="entry name" value="CHORISMATE_SYNTHASE_3"/>
    <property type="match status" value="1"/>
</dbReference>
<protein>
    <recommendedName>
        <fullName evidence="1">Chorismate synthase</fullName>
        <shortName evidence="1">CS</shortName>
        <ecNumber evidence="1">4.2.3.5</ecNumber>
    </recommendedName>
    <alternativeName>
        <fullName evidence="1">5-enolpyruvylshikimate-3-phosphate phospholyase</fullName>
    </alternativeName>
</protein>
<accession>Q2KYK7</accession>
<proteinExistence type="inferred from homology"/>
<organism>
    <name type="scientific">Bordetella avium (strain 197N)</name>
    <dbReference type="NCBI Taxonomy" id="360910"/>
    <lineage>
        <taxon>Bacteria</taxon>
        <taxon>Pseudomonadati</taxon>
        <taxon>Pseudomonadota</taxon>
        <taxon>Betaproteobacteria</taxon>
        <taxon>Burkholderiales</taxon>
        <taxon>Alcaligenaceae</taxon>
        <taxon>Bordetella</taxon>
    </lineage>
</organism>
<keyword id="KW-0028">Amino-acid biosynthesis</keyword>
<keyword id="KW-0057">Aromatic amino acid biosynthesis</keyword>
<keyword id="KW-0274">FAD</keyword>
<keyword id="KW-0285">Flavoprotein</keyword>
<keyword id="KW-0288">FMN</keyword>
<keyword id="KW-0456">Lyase</keyword>
<keyword id="KW-0521">NADP</keyword>
<keyword id="KW-1185">Reference proteome</keyword>
<reference key="1">
    <citation type="journal article" date="2006" name="J. Bacteriol.">
        <title>Comparison of the genome sequence of the poultry pathogen Bordetella avium with those of B. bronchiseptica, B. pertussis, and B. parapertussis reveals extensive diversity in surface structures associated with host interaction.</title>
        <authorList>
            <person name="Sebaihia M."/>
            <person name="Preston A."/>
            <person name="Maskell D.J."/>
            <person name="Kuzmiak H."/>
            <person name="Connell T.D."/>
            <person name="King N.D."/>
            <person name="Orndorff P.E."/>
            <person name="Miyamoto D.M."/>
            <person name="Thomson N.R."/>
            <person name="Harris D."/>
            <person name="Goble A."/>
            <person name="Lord A."/>
            <person name="Murphy L."/>
            <person name="Quail M.A."/>
            <person name="Rutter S."/>
            <person name="Squares R."/>
            <person name="Squares S."/>
            <person name="Woodward J."/>
            <person name="Parkhill J."/>
            <person name="Temple L.M."/>
        </authorList>
    </citation>
    <scope>NUCLEOTIDE SEQUENCE [LARGE SCALE GENOMIC DNA]</scope>
    <source>
        <strain>197N</strain>
    </source>
</reference>
<name>AROC_BORA1</name>
<gene>
    <name evidence="1" type="primary">aroC</name>
    <name type="ordered locus">BAV2273</name>
</gene>
<feature type="chain" id="PRO_0000256274" description="Chorismate synthase">
    <location>
        <begin position="1"/>
        <end position="352"/>
    </location>
</feature>
<feature type="binding site" evidence="1">
    <location>
        <position position="48"/>
    </location>
    <ligand>
        <name>NADP(+)</name>
        <dbReference type="ChEBI" id="CHEBI:58349"/>
    </ligand>
</feature>
<feature type="binding site" evidence="1">
    <location>
        <position position="54"/>
    </location>
    <ligand>
        <name>NADP(+)</name>
        <dbReference type="ChEBI" id="CHEBI:58349"/>
    </ligand>
</feature>
<feature type="binding site" evidence="1">
    <location>
        <begin position="125"/>
        <end position="127"/>
    </location>
    <ligand>
        <name>FMN</name>
        <dbReference type="ChEBI" id="CHEBI:58210"/>
    </ligand>
</feature>
<feature type="binding site" evidence="1">
    <location>
        <begin position="238"/>
        <end position="239"/>
    </location>
    <ligand>
        <name>FMN</name>
        <dbReference type="ChEBI" id="CHEBI:58210"/>
    </ligand>
</feature>
<feature type="binding site" evidence="1">
    <location>
        <position position="278"/>
    </location>
    <ligand>
        <name>FMN</name>
        <dbReference type="ChEBI" id="CHEBI:58210"/>
    </ligand>
</feature>
<feature type="binding site" evidence="1">
    <location>
        <begin position="293"/>
        <end position="297"/>
    </location>
    <ligand>
        <name>FMN</name>
        <dbReference type="ChEBI" id="CHEBI:58210"/>
    </ligand>
</feature>
<feature type="binding site" evidence="1">
    <location>
        <position position="319"/>
    </location>
    <ligand>
        <name>FMN</name>
        <dbReference type="ChEBI" id="CHEBI:58210"/>
    </ligand>
</feature>
<sequence length="352" mass="37544">MSGNTLGSLFRVTNFGESHGPAIGCVVDGCPPGLPLDAADIQRELDRRRPGTSRHVTQRQEADQVEILSGVYEGVTTGTPIGLLIRNIDARSKDYSNIADTFRPGHADYSYWKKFGQRDPRGGGRSSARLTAPTVAAGAIAKKWLAQQHGTIVRGYMSQLGPIEIPFVSWDEVPNNPFYAPNAAIVPELEAYMDALRRDGDSIGARIEVVAEHLPAGWGEPIYDRLDADIAHAMMGLNAVKGVSIGAGFGSITQRGSEHGDEITPDGFLSNHAGGVLGGISTGQPVTVSLAIKPTSSIRVERRSVNRAGEPVNVQTLGRHDPCVGIRATPIAEALLALVLIDHALRHRGQCG</sequence>